<name>COX2_SCICA</name>
<sequence length="227" mass="25992">MAYPFELGFQDATSPIMEELLHFHDHTLMIVFLISSLVLYIISLMLTTKLTHTSTMDAQEVETIWTILPAIILILIALPSLRVLYMMDEINDPSLTVKTMGHQWYWSYEYTDYEDLNFDSYMIPTSELKPGELRLLEVDNRVVLPMELPIRMLISSEDVLHSWAVPSLGLKTDAIPGRLNQATLTSTRPGLYYGQCSEICGSNHSFMPIVLEMVPLKHFENWSSSML</sequence>
<geneLocation type="mitochondrion"/>
<keyword id="KW-0186">Copper</keyword>
<keyword id="KW-0249">Electron transport</keyword>
<keyword id="KW-0460">Magnesium</keyword>
<keyword id="KW-0472">Membrane</keyword>
<keyword id="KW-0479">Metal-binding</keyword>
<keyword id="KW-0496">Mitochondrion</keyword>
<keyword id="KW-0999">Mitochondrion inner membrane</keyword>
<keyword id="KW-0679">Respiratory chain</keyword>
<keyword id="KW-1278">Translocase</keyword>
<keyword id="KW-0812">Transmembrane</keyword>
<keyword id="KW-1133">Transmembrane helix</keyword>
<keyword id="KW-0813">Transport</keyword>
<feature type="chain" id="PRO_0000183687" description="Cytochrome c oxidase subunit 2">
    <location>
        <begin position="1"/>
        <end position="227"/>
    </location>
</feature>
<feature type="topological domain" description="Mitochondrial intermembrane" evidence="3">
    <location>
        <begin position="1"/>
        <end position="14"/>
    </location>
</feature>
<feature type="transmembrane region" description="Helical; Name=I" evidence="3">
    <location>
        <begin position="15"/>
        <end position="45"/>
    </location>
</feature>
<feature type="topological domain" description="Mitochondrial matrix" evidence="3">
    <location>
        <begin position="46"/>
        <end position="59"/>
    </location>
</feature>
<feature type="transmembrane region" description="Helical; Name=II" evidence="3">
    <location>
        <begin position="60"/>
        <end position="87"/>
    </location>
</feature>
<feature type="topological domain" description="Mitochondrial intermembrane" evidence="3">
    <location>
        <begin position="88"/>
        <end position="227"/>
    </location>
</feature>
<feature type="binding site" evidence="3">
    <location>
        <position position="161"/>
    </location>
    <ligand>
        <name>Cu cation</name>
        <dbReference type="ChEBI" id="CHEBI:23378"/>
        <label>A1</label>
    </ligand>
</feature>
<feature type="binding site" evidence="3">
    <location>
        <position position="196"/>
    </location>
    <ligand>
        <name>Cu cation</name>
        <dbReference type="ChEBI" id="CHEBI:23378"/>
        <label>A1</label>
    </ligand>
</feature>
<feature type="binding site" evidence="3">
    <location>
        <position position="196"/>
    </location>
    <ligand>
        <name>Cu cation</name>
        <dbReference type="ChEBI" id="CHEBI:23378"/>
        <label>A2</label>
    </ligand>
</feature>
<feature type="binding site" evidence="3">
    <location>
        <position position="198"/>
    </location>
    <ligand>
        <name>Cu cation</name>
        <dbReference type="ChEBI" id="CHEBI:23378"/>
        <label>A2</label>
    </ligand>
</feature>
<feature type="binding site" evidence="3">
    <location>
        <position position="198"/>
    </location>
    <ligand>
        <name>Mg(2+)</name>
        <dbReference type="ChEBI" id="CHEBI:18420"/>
        <note>ligand shared with MT-CO1</note>
    </ligand>
</feature>
<feature type="binding site" evidence="3">
    <location>
        <position position="200"/>
    </location>
    <ligand>
        <name>Cu cation</name>
        <dbReference type="ChEBI" id="CHEBI:23378"/>
        <label>A1</label>
    </ligand>
</feature>
<feature type="binding site" evidence="3">
    <location>
        <position position="200"/>
    </location>
    <ligand>
        <name>Cu cation</name>
        <dbReference type="ChEBI" id="CHEBI:23378"/>
        <label>A2</label>
    </ligand>
</feature>
<feature type="binding site" evidence="3">
    <location>
        <position position="204"/>
    </location>
    <ligand>
        <name>Cu cation</name>
        <dbReference type="ChEBI" id="CHEBI:23378"/>
        <label>A2</label>
    </ligand>
</feature>
<feature type="binding site" evidence="3">
    <location>
        <position position="207"/>
    </location>
    <ligand>
        <name>Cu cation</name>
        <dbReference type="ChEBI" id="CHEBI:23378"/>
        <label>A1</label>
    </ligand>
</feature>
<accession>P50691</accession>
<evidence type="ECO:0000250" key="1">
    <source>
        <dbReference type="UniProtKB" id="P00403"/>
    </source>
</evidence>
<evidence type="ECO:0000250" key="2">
    <source>
        <dbReference type="UniProtKB" id="P00410"/>
    </source>
</evidence>
<evidence type="ECO:0000250" key="3">
    <source>
        <dbReference type="UniProtKB" id="P68530"/>
    </source>
</evidence>
<evidence type="ECO:0000305" key="4"/>
<dbReference type="EC" id="7.1.1.9"/>
<dbReference type="EMBL" id="U18831">
    <property type="protein sequence ID" value="AAA75621.1"/>
    <property type="molecule type" value="Genomic_DNA"/>
</dbReference>
<dbReference type="PIR" id="I62728">
    <property type="entry name" value="I62728"/>
</dbReference>
<dbReference type="SMR" id="P50691"/>
<dbReference type="GO" id="GO:0005743">
    <property type="term" value="C:mitochondrial inner membrane"/>
    <property type="evidence" value="ECO:0007669"/>
    <property type="project" value="UniProtKB-SubCell"/>
</dbReference>
<dbReference type="GO" id="GO:0045277">
    <property type="term" value="C:respiratory chain complex IV"/>
    <property type="evidence" value="ECO:0000250"/>
    <property type="project" value="UniProtKB"/>
</dbReference>
<dbReference type="GO" id="GO:0005507">
    <property type="term" value="F:copper ion binding"/>
    <property type="evidence" value="ECO:0007669"/>
    <property type="project" value="InterPro"/>
</dbReference>
<dbReference type="GO" id="GO:0004129">
    <property type="term" value="F:cytochrome-c oxidase activity"/>
    <property type="evidence" value="ECO:0007669"/>
    <property type="project" value="UniProtKB-EC"/>
</dbReference>
<dbReference type="GO" id="GO:0042773">
    <property type="term" value="P:ATP synthesis coupled electron transport"/>
    <property type="evidence" value="ECO:0007669"/>
    <property type="project" value="TreeGrafter"/>
</dbReference>
<dbReference type="CDD" id="cd13912">
    <property type="entry name" value="CcO_II_C"/>
    <property type="match status" value="1"/>
</dbReference>
<dbReference type="FunFam" id="1.10.287.90:FF:000001">
    <property type="entry name" value="Cytochrome c oxidase subunit 2"/>
    <property type="match status" value="1"/>
</dbReference>
<dbReference type="FunFam" id="2.60.40.420:FF:000001">
    <property type="entry name" value="Cytochrome c oxidase subunit 2"/>
    <property type="match status" value="1"/>
</dbReference>
<dbReference type="Gene3D" id="1.10.287.90">
    <property type="match status" value="1"/>
</dbReference>
<dbReference type="Gene3D" id="2.60.40.420">
    <property type="entry name" value="Cupredoxins - blue copper proteins"/>
    <property type="match status" value="1"/>
</dbReference>
<dbReference type="InterPro" id="IPR045187">
    <property type="entry name" value="CcO_II"/>
</dbReference>
<dbReference type="InterPro" id="IPR002429">
    <property type="entry name" value="CcO_II-like_C"/>
</dbReference>
<dbReference type="InterPro" id="IPR034210">
    <property type="entry name" value="CcO_II_C"/>
</dbReference>
<dbReference type="InterPro" id="IPR001505">
    <property type="entry name" value="Copper_CuA"/>
</dbReference>
<dbReference type="InterPro" id="IPR008972">
    <property type="entry name" value="Cupredoxin"/>
</dbReference>
<dbReference type="InterPro" id="IPR014222">
    <property type="entry name" value="Cyt_c_oxidase_su2"/>
</dbReference>
<dbReference type="InterPro" id="IPR011759">
    <property type="entry name" value="Cyt_c_oxidase_su2_TM_dom"/>
</dbReference>
<dbReference type="InterPro" id="IPR036257">
    <property type="entry name" value="Cyt_c_oxidase_su2_TM_sf"/>
</dbReference>
<dbReference type="NCBIfam" id="TIGR02866">
    <property type="entry name" value="CoxB"/>
    <property type="match status" value="1"/>
</dbReference>
<dbReference type="PANTHER" id="PTHR22888:SF9">
    <property type="entry name" value="CYTOCHROME C OXIDASE SUBUNIT 2"/>
    <property type="match status" value="1"/>
</dbReference>
<dbReference type="PANTHER" id="PTHR22888">
    <property type="entry name" value="CYTOCHROME C OXIDASE, SUBUNIT II"/>
    <property type="match status" value="1"/>
</dbReference>
<dbReference type="Pfam" id="PF00116">
    <property type="entry name" value="COX2"/>
    <property type="match status" value="1"/>
</dbReference>
<dbReference type="Pfam" id="PF02790">
    <property type="entry name" value="COX2_TM"/>
    <property type="match status" value="1"/>
</dbReference>
<dbReference type="PRINTS" id="PR01166">
    <property type="entry name" value="CYCOXIDASEII"/>
</dbReference>
<dbReference type="SUPFAM" id="SSF49503">
    <property type="entry name" value="Cupredoxins"/>
    <property type="match status" value="1"/>
</dbReference>
<dbReference type="SUPFAM" id="SSF81464">
    <property type="entry name" value="Cytochrome c oxidase subunit II-like, transmembrane region"/>
    <property type="match status" value="1"/>
</dbReference>
<dbReference type="PROSITE" id="PS00078">
    <property type="entry name" value="COX2"/>
    <property type="match status" value="1"/>
</dbReference>
<dbReference type="PROSITE" id="PS50857">
    <property type="entry name" value="COX2_CUA"/>
    <property type="match status" value="1"/>
</dbReference>
<dbReference type="PROSITE" id="PS50999">
    <property type="entry name" value="COX2_TM"/>
    <property type="match status" value="1"/>
</dbReference>
<proteinExistence type="inferred from homology"/>
<gene>
    <name type="primary">MT-CO2</name>
    <name type="synonym">COII</name>
    <name type="synonym">COX2</name>
    <name type="synonym">COXII</name>
    <name type="synonym">MTCO2</name>
</gene>
<organism>
    <name type="scientific">Sciurus carolinensis</name>
    <name type="common">Eastern gray squirrel</name>
    <dbReference type="NCBI Taxonomy" id="30640"/>
    <lineage>
        <taxon>Eukaryota</taxon>
        <taxon>Metazoa</taxon>
        <taxon>Chordata</taxon>
        <taxon>Craniata</taxon>
        <taxon>Vertebrata</taxon>
        <taxon>Euteleostomi</taxon>
        <taxon>Mammalia</taxon>
        <taxon>Eutheria</taxon>
        <taxon>Euarchontoglires</taxon>
        <taxon>Glires</taxon>
        <taxon>Rodentia</taxon>
        <taxon>Sciuromorpha</taxon>
        <taxon>Sciuridae</taxon>
        <taxon>Sciurinae</taxon>
        <taxon>Sciurini</taxon>
        <taxon>Sciurus</taxon>
    </lineage>
</organism>
<comment type="function">
    <text evidence="2">Component of the cytochrome c oxidase, the last enzyme in the mitochondrial electron transport chain which drives oxidative phosphorylation. The respiratory chain contains 3 multisubunit complexes succinate dehydrogenase (complex II, CII), ubiquinol-cytochrome c oxidoreductase (cytochrome b-c1 complex, complex III, CIII) and cytochrome c oxidase (complex IV, CIV), that cooperate to transfer electrons derived from NADH and succinate to molecular oxygen, creating an electrochemical gradient over the inner membrane that drives transmembrane transport and the ATP synthase. Cytochrome c oxidase is the component of the respiratory chain that catalyzes the reduction of oxygen to water. Electrons originating from reduced cytochrome c in the intermembrane space (IMS) are transferred via the dinuclear copper A center (CU(A)) of subunit 2 and heme A of subunit 1 to the active site in subunit 1, a binuclear center (BNC) formed by heme A3 and copper B (CU(B)). The BNC reduces molecular oxygen to 2 water molecules using 4 electrons from cytochrome c in the IMS and 4 protons from the mitochondrial matrix.</text>
</comment>
<comment type="catalytic activity">
    <reaction evidence="2">
        <text>4 Fe(II)-[cytochrome c] + O2 + 8 H(+)(in) = 4 Fe(III)-[cytochrome c] + 2 H2O + 4 H(+)(out)</text>
        <dbReference type="Rhea" id="RHEA:11436"/>
        <dbReference type="Rhea" id="RHEA-COMP:10350"/>
        <dbReference type="Rhea" id="RHEA-COMP:14399"/>
        <dbReference type="ChEBI" id="CHEBI:15377"/>
        <dbReference type="ChEBI" id="CHEBI:15378"/>
        <dbReference type="ChEBI" id="CHEBI:15379"/>
        <dbReference type="ChEBI" id="CHEBI:29033"/>
        <dbReference type="ChEBI" id="CHEBI:29034"/>
        <dbReference type="EC" id="7.1.1.9"/>
    </reaction>
    <physiologicalReaction direction="left-to-right" evidence="2">
        <dbReference type="Rhea" id="RHEA:11437"/>
    </physiologicalReaction>
</comment>
<comment type="cofactor">
    <cofactor evidence="3">
        <name>Cu cation</name>
        <dbReference type="ChEBI" id="CHEBI:23378"/>
    </cofactor>
    <text evidence="3">Binds a dinuclear copper A center per subunit.</text>
</comment>
<comment type="subunit">
    <text evidence="1 3">Component of the cytochrome c oxidase (complex IV, CIV), a multisubunit enzyme composed of 14 subunits. The complex is composed of a catalytic core of 3 subunits MT-CO1, MT-CO2 and MT-CO3, encoded in the mitochondrial DNA, and 11 supernumerary subunits COX4I, COX5A, COX5B, COX6A, COX6B, COX6C, COX7A, COX7B, COX7C, COX8 and NDUFA4, which are encoded in the nuclear genome. The complex exists as a monomer or a dimer and forms supercomplexes (SCs) in the inner mitochondrial membrane with NADH-ubiquinone oxidoreductase (complex I, CI) and ubiquinol-cytochrome c oxidoreductase (cytochrome b-c1 complex, complex III, CIII), resulting in different assemblies (supercomplex SCI(1)III(2)IV(1) and megacomplex MCI(2)III(2)IV(2)) (By similarity). Found in a complex with TMEM177, COA6, COX18, COX20, SCO1 and SCO2. Interacts with TMEM177 in a COX20-dependent manner. Interacts with COX20. Interacts with COX16 (By similarity).</text>
</comment>
<comment type="subcellular location">
    <subcellularLocation>
        <location evidence="3">Mitochondrion inner membrane</location>
        <topology evidence="3">Multi-pass membrane protein</topology>
    </subcellularLocation>
</comment>
<comment type="similarity">
    <text evidence="4">Belongs to the cytochrome c oxidase subunit 2 family.</text>
</comment>
<protein>
    <recommendedName>
        <fullName>Cytochrome c oxidase subunit 2</fullName>
        <ecNumber>7.1.1.9</ecNumber>
    </recommendedName>
    <alternativeName>
        <fullName>Cytochrome c oxidase polypeptide II</fullName>
    </alternativeName>
</protein>
<reference key="1">
    <citation type="journal article" date="1995" name="J. Mol. Evol.">
        <title>Mammalian mitochondrial DNA evolution: a comparison of the cytochrome b and cytochrome c oxidase II genes.</title>
        <authorList>
            <person name="Honeycutt R.L."/>
            <person name="Nedbal M.A."/>
            <person name="Adkins R.M."/>
            <person name="Janecek L.L."/>
        </authorList>
    </citation>
    <scope>NUCLEOTIDE SEQUENCE [GENOMIC DNA]</scope>
</reference>